<gene>
    <name evidence="1" type="primary">E2</name>
</gene>
<dbReference type="EMBL" id="X62844">
    <property type="protein sequence ID" value="CAA44658.1"/>
    <property type="molecule type" value="Genomic_DNA"/>
</dbReference>
<dbReference type="SMR" id="Q02264"/>
<dbReference type="Proteomes" id="UP000000469">
    <property type="component" value="Genome"/>
</dbReference>
<dbReference type="GO" id="GO:0042025">
    <property type="term" value="C:host cell nucleus"/>
    <property type="evidence" value="ECO:0007669"/>
    <property type="project" value="UniProtKB-SubCell"/>
</dbReference>
<dbReference type="GO" id="GO:0003677">
    <property type="term" value="F:DNA binding"/>
    <property type="evidence" value="ECO:0007669"/>
    <property type="project" value="UniProtKB-UniRule"/>
</dbReference>
<dbReference type="GO" id="GO:0003700">
    <property type="term" value="F:DNA-binding transcription factor activity"/>
    <property type="evidence" value="ECO:0007669"/>
    <property type="project" value="UniProtKB-UniRule"/>
</dbReference>
<dbReference type="GO" id="GO:0000166">
    <property type="term" value="F:nucleotide binding"/>
    <property type="evidence" value="ECO:0007669"/>
    <property type="project" value="UniProtKB-UniRule"/>
</dbReference>
<dbReference type="GO" id="GO:0006260">
    <property type="term" value="P:DNA replication"/>
    <property type="evidence" value="ECO:0007669"/>
    <property type="project" value="UniProtKB-KW"/>
</dbReference>
<dbReference type="GO" id="GO:0006351">
    <property type="term" value="P:DNA-templated transcription"/>
    <property type="evidence" value="ECO:0007669"/>
    <property type="project" value="UniProtKB-UniRule"/>
</dbReference>
<dbReference type="GO" id="GO:0006275">
    <property type="term" value="P:regulation of DNA replication"/>
    <property type="evidence" value="ECO:0007669"/>
    <property type="project" value="UniProtKB-UniRule"/>
</dbReference>
<dbReference type="GO" id="GO:0039693">
    <property type="term" value="P:viral DNA genome replication"/>
    <property type="evidence" value="ECO:0007669"/>
    <property type="project" value="UniProtKB-UniRule"/>
</dbReference>
<dbReference type="Gene3D" id="3.30.70.330">
    <property type="match status" value="1"/>
</dbReference>
<dbReference type="Gene3D" id="1.10.287.30">
    <property type="entry name" value="E2 (early) protein, N terminal domain, subdomain 1"/>
    <property type="match status" value="1"/>
</dbReference>
<dbReference type="Gene3D" id="2.170.200.10">
    <property type="entry name" value="Papillomavirus E2 early protein domain"/>
    <property type="match status" value="1"/>
</dbReference>
<dbReference type="HAMAP" id="MF_04001">
    <property type="entry name" value="PPV_E2"/>
    <property type="match status" value="1"/>
</dbReference>
<dbReference type="InterPro" id="IPR035975">
    <property type="entry name" value="E2/EBNA1_C_sf"/>
</dbReference>
<dbReference type="InterPro" id="IPR012677">
    <property type="entry name" value="Nucleotide-bd_a/b_plait_sf"/>
</dbReference>
<dbReference type="InterPro" id="IPR000427">
    <property type="entry name" value="Papillomavirus_E2_C"/>
</dbReference>
<dbReference type="InterPro" id="IPR001866">
    <property type="entry name" value="PPV_E2_N"/>
</dbReference>
<dbReference type="InterPro" id="IPR033668">
    <property type="entry name" value="Reg_prot_E2"/>
</dbReference>
<dbReference type="InterPro" id="IPR036050">
    <property type="entry name" value="Regulatory_protein_E2_N"/>
</dbReference>
<dbReference type="InterPro" id="IPR042503">
    <property type="entry name" value="Regulatory_protein_E2_N_1"/>
</dbReference>
<dbReference type="InterPro" id="IPR042504">
    <property type="entry name" value="Regulatory_protein_E2_N_2"/>
</dbReference>
<dbReference type="Pfam" id="PF00511">
    <property type="entry name" value="PPV_E2_C"/>
    <property type="match status" value="1"/>
</dbReference>
<dbReference type="Pfam" id="PF00508">
    <property type="entry name" value="PPV_E2_N"/>
    <property type="match status" value="1"/>
</dbReference>
<dbReference type="SUPFAM" id="SSF51332">
    <property type="entry name" value="E2 regulatory, transactivation domain"/>
    <property type="match status" value="1"/>
</dbReference>
<dbReference type="SUPFAM" id="SSF54957">
    <property type="entry name" value="Viral DNA-binding domain"/>
    <property type="match status" value="1"/>
</dbReference>
<comment type="function">
    <text evidence="1">Plays a role in the initiation of viral DNA replication. A dimer of E2 interacts with a dimer of E1 in order to improve specificity of E1 DNA binding activity. Once the complex recognizes and binds DNA at specific sites, the E2 dimer is removed from DNA. E2 also regulates viral transcription through binding to the E2RE response element (5'-ACCNNNNNNGGT-3') present in multiple copies in the regulatory regions of the viral genome. Activates or represses transcription depending on E2RE's position with regards to proximal promoter elements including the TATA-box. Repression occurs by sterically hindering the assembly of the transcription initiation complex.</text>
</comment>
<comment type="subunit">
    <text evidence="1">Binds DNA as homodimer. Interacts with protein E1; this interaction greatly increases E1 DNA-binding activity. Interacts with protein L1; this interaction enhances E2-dependent replication and transcription activation. Interacts with protein L2; this interaction inhibits E2 transcriptional activity but not DNA replication function E2. Interacts with protein E7; this interaction inhibits E7 oncogenic activity. Interacts with host TAF1; this interaction modulates E2-dependent transcriptional regulation. Interacts with host BRD4; this interaction mediates E2 transcriptional activation function. Additionally, the interaction with host BRD4 on mitotic chromosomes mediates tethering of the viral genome. Interacts with host TOPBP1; this interaction is required for optimal viral DNA replication.</text>
</comment>
<comment type="subcellular location">
    <subcellularLocation>
        <location evidence="1">Host nucleus</location>
    </subcellularLocation>
</comment>
<comment type="PTM">
    <text evidence="1">Phosphorylated.</text>
</comment>
<comment type="similarity">
    <text evidence="1">Belongs to the papillomaviridae E2 protein family.</text>
</comment>
<sequence length="377" mass="43264">METLAKHLDACQEQLLELYEENSNELTKHIQHWKCVRHENVLLYKARQMGLSHIGLQVVPPLKVSQTKGHEAIEMQMTLETVLKSEYGTEPWTLQETSFEMWLTPPKHCFKKQGQTVEVRYDCNAENSMHYVLWKYIYVCENDRWQKVKGMVDIKGLYYMVGQCKTYYIDFEKEAKQYSKTLQWEVCYDSKVICSPASVSSTVQEVSIAGPTSHSTTTLAQATCAVSSIATEDSVQAPPYKRLRGPSHCARKLQNTSNIVCATDRGTLDSENNINNNNYNNNNQQRNNSNSSGTPIVQLQGDSNNLKCFRYRLHDKYKHLFMLASSTWHWTASSNSTKNAIVTLTYVNEQQRQDFLNTVKIPATIKHTLGFMSFQLL</sequence>
<name>VE2_PCPV1</name>
<proteinExistence type="inferred from homology"/>
<keyword id="KW-0010">Activator</keyword>
<keyword id="KW-0235">DNA replication</keyword>
<keyword id="KW-0238">DNA-binding</keyword>
<keyword id="KW-0244">Early protein</keyword>
<keyword id="KW-1048">Host nucleus</keyword>
<keyword id="KW-0597">Phosphoprotein</keyword>
<keyword id="KW-1185">Reference proteome</keyword>
<keyword id="KW-0678">Repressor</keyword>
<keyword id="KW-0804">Transcription</keyword>
<keyword id="KW-0805">Transcription regulation</keyword>
<accession>Q02264</accession>
<evidence type="ECO:0000255" key="1">
    <source>
        <dbReference type="HAMAP-Rule" id="MF_04001"/>
    </source>
</evidence>
<evidence type="ECO:0000256" key="2">
    <source>
        <dbReference type="SAM" id="MobiDB-lite"/>
    </source>
</evidence>
<organism>
    <name type="scientific">Pygmy chimpanzee papillomavirus type 1</name>
    <name type="common">PCPV-1</name>
    <dbReference type="NCBI Taxonomy" id="10576"/>
    <lineage>
        <taxon>Viruses</taxon>
        <taxon>Monodnaviria</taxon>
        <taxon>Shotokuvirae</taxon>
        <taxon>Cossaviricota</taxon>
        <taxon>Papovaviricetes</taxon>
        <taxon>Zurhausenvirales</taxon>
        <taxon>Papillomaviridae</taxon>
        <taxon>Firstpapillomavirinae</taxon>
        <taxon>Alphapapillomavirus</taxon>
        <taxon>Alphapapillomavirus 10</taxon>
    </lineage>
</organism>
<reference key="1">
    <citation type="journal article" date="1992" name="Virology">
        <title>Human papillomavirus type 13 and pygmy chimpanzee papillomavirus type 1: comparison of the genome organizations.</title>
        <authorList>
            <person name="van Ranst M."/>
            <person name="Fuse A."/>
            <person name="Fiten P."/>
            <person name="Beuken E."/>
            <person name="Pfister H."/>
            <person name="Burk R.D."/>
            <person name="Opdenakker G."/>
        </authorList>
    </citation>
    <scope>NUCLEOTIDE SEQUENCE [GENOMIC DNA]</scope>
</reference>
<feature type="chain" id="PRO_0000133243" description="Regulatory protein E2">
    <location>
        <begin position="1"/>
        <end position="377"/>
    </location>
</feature>
<feature type="region of interest" description="Transactivation domain" evidence="1">
    <location>
        <begin position="1"/>
        <end position="200"/>
    </location>
</feature>
<feature type="region of interest" description="Disordered" evidence="2">
    <location>
        <begin position="270"/>
        <end position="297"/>
    </location>
</feature>
<feature type="region of interest" description="DNA-binding domain" evidence="1">
    <location>
        <begin position="293"/>
        <end position="377"/>
    </location>
</feature>
<feature type="compositionally biased region" description="Low complexity" evidence="2">
    <location>
        <begin position="272"/>
        <end position="292"/>
    </location>
</feature>
<protein>
    <recommendedName>
        <fullName evidence="1">Regulatory protein E2</fullName>
    </recommendedName>
</protein>
<organismHost>
    <name type="scientific">Pan paniscus</name>
    <name type="common">Pygmy chimpanzee</name>
    <name type="synonym">Bonobo</name>
    <dbReference type="NCBI Taxonomy" id="9597"/>
</organismHost>